<name>NCPP_ERWT9</name>
<sequence length="182" mass="19834">MYHVVAATINPAKIKAISQAFSDIFGAGSCHIEGVEVDSGVAAQPISNTETRTGARQRVMNARRVRPEADFWVAIEAGIEEDTAFAWMVVENQKLRGESRSASFTLPAIVMKGIHQGRELGDEMARLTGIDNIKHKGGAIGAFTAGHLTRSSVYHQALILALCPFHNDIYQRKADDEDSDLI</sequence>
<proteinExistence type="inferred from homology"/>
<reference key="1">
    <citation type="journal article" date="2008" name="Environ. Microbiol.">
        <title>The genome of Erwinia tasmaniensis strain Et1/99, a non-pathogenic bacterium in the genus Erwinia.</title>
        <authorList>
            <person name="Kube M."/>
            <person name="Migdoll A.M."/>
            <person name="Mueller I."/>
            <person name="Kuhl H."/>
            <person name="Beck A."/>
            <person name="Reinhardt R."/>
            <person name="Geider K."/>
        </authorList>
    </citation>
    <scope>NUCLEOTIDE SEQUENCE [LARGE SCALE GENOMIC DNA]</scope>
    <source>
        <strain>DSM 17950 / CFBP 7177 / CIP 109463 / NCPPB 4357 / Et1/99</strain>
    </source>
</reference>
<comment type="function">
    <text evidence="1">Phosphatase that hydrolyzes non-canonical purine nucleotides such as XTP and ITP to their respective diphosphate derivatives. Probably excludes non-canonical purines from DNA/RNA precursor pool, thus preventing their incorporation into DNA/RNA and avoiding chromosomal lesions.</text>
</comment>
<comment type="catalytic activity">
    <reaction evidence="1">
        <text>XTP + H2O = XDP + phosphate + H(+)</text>
        <dbReference type="Rhea" id="RHEA:28406"/>
        <dbReference type="ChEBI" id="CHEBI:15377"/>
        <dbReference type="ChEBI" id="CHEBI:15378"/>
        <dbReference type="ChEBI" id="CHEBI:43474"/>
        <dbReference type="ChEBI" id="CHEBI:59884"/>
        <dbReference type="ChEBI" id="CHEBI:61314"/>
        <dbReference type="EC" id="3.6.1.73"/>
    </reaction>
</comment>
<comment type="catalytic activity">
    <reaction evidence="1">
        <text>ITP + H2O = IDP + phosphate + H(+)</text>
        <dbReference type="Rhea" id="RHEA:28330"/>
        <dbReference type="ChEBI" id="CHEBI:15377"/>
        <dbReference type="ChEBI" id="CHEBI:15378"/>
        <dbReference type="ChEBI" id="CHEBI:43474"/>
        <dbReference type="ChEBI" id="CHEBI:58280"/>
        <dbReference type="ChEBI" id="CHEBI:61402"/>
        <dbReference type="EC" id="3.6.1.73"/>
    </reaction>
</comment>
<comment type="cofactor">
    <cofactor evidence="1">
        <name>Mg(2+)</name>
        <dbReference type="ChEBI" id="CHEBI:18420"/>
    </cofactor>
    <cofactor evidence="1">
        <name>Mn(2+)</name>
        <dbReference type="ChEBI" id="CHEBI:29035"/>
    </cofactor>
    <text evidence="1">Binds 1 divalent metal cation per subunit; can use either Mg(2+) or Mn(2+).</text>
</comment>
<comment type="subunit">
    <text evidence="1">Homodimer.</text>
</comment>
<comment type="similarity">
    <text evidence="1">Belongs to the YjjX NTPase family.</text>
</comment>
<keyword id="KW-0378">Hydrolase</keyword>
<keyword id="KW-0460">Magnesium</keyword>
<keyword id="KW-0464">Manganese</keyword>
<keyword id="KW-0479">Metal-binding</keyword>
<keyword id="KW-0546">Nucleotide metabolism</keyword>
<keyword id="KW-0547">Nucleotide-binding</keyword>
<keyword id="KW-1185">Reference proteome</keyword>
<protein>
    <recommendedName>
        <fullName evidence="1">Inosine/xanthosine triphosphatase</fullName>
        <shortName evidence="1">ITPase/XTPase</shortName>
        <ecNumber evidence="1">3.6.1.73</ecNumber>
    </recommendedName>
    <alternativeName>
        <fullName evidence="1">Non-canonical purine NTP phosphatase</fullName>
    </alternativeName>
    <alternativeName>
        <fullName evidence="1">Non-standard purine NTP phosphatase</fullName>
    </alternativeName>
    <alternativeName>
        <fullName evidence="1">Nucleoside-triphosphate phosphatase</fullName>
        <shortName evidence="1">NTPase</shortName>
    </alternativeName>
</protein>
<evidence type="ECO:0000255" key="1">
    <source>
        <dbReference type="HAMAP-Rule" id="MF_00648"/>
    </source>
</evidence>
<feature type="chain" id="PRO_1000130938" description="Inosine/xanthosine triphosphatase">
    <location>
        <begin position="1"/>
        <end position="182"/>
    </location>
</feature>
<feature type="binding site" evidence="1">
    <location>
        <position position="38"/>
    </location>
    <ligand>
        <name>Mg(2+)</name>
        <dbReference type="ChEBI" id="CHEBI:18420"/>
    </ligand>
</feature>
<feature type="binding site" evidence="1">
    <location>
        <begin position="68"/>
        <end position="69"/>
    </location>
    <ligand>
        <name>substrate</name>
    </ligand>
</feature>
<feature type="binding site" evidence="1">
    <location>
        <position position="68"/>
    </location>
    <ligand>
        <name>Mg(2+)</name>
        <dbReference type="ChEBI" id="CHEBI:18420"/>
    </ligand>
</feature>
<gene>
    <name type="ordered locus">ETA_06920</name>
</gene>
<dbReference type="EC" id="3.6.1.73" evidence="1"/>
<dbReference type="EMBL" id="CU468135">
    <property type="protein sequence ID" value="CAO95738.1"/>
    <property type="molecule type" value="Genomic_DNA"/>
</dbReference>
<dbReference type="RefSeq" id="WP_012440440.1">
    <property type="nucleotide sequence ID" value="NC_010694.1"/>
</dbReference>
<dbReference type="SMR" id="B2VH10"/>
<dbReference type="STRING" id="465817.ETA_06920"/>
<dbReference type="KEGG" id="eta:ETA_06920"/>
<dbReference type="eggNOG" id="COG1986">
    <property type="taxonomic scope" value="Bacteria"/>
</dbReference>
<dbReference type="HOGENOM" id="CLU_087417_1_0_6"/>
<dbReference type="OrthoDB" id="6334099at2"/>
<dbReference type="Proteomes" id="UP000001726">
    <property type="component" value="Chromosome"/>
</dbReference>
<dbReference type="GO" id="GO:0103023">
    <property type="term" value="F:ITPase activity"/>
    <property type="evidence" value="ECO:0007669"/>
    <property type="project" value="UniProtKB-EC"/>
</dbReference>
<dbReference type="GO" id="GO:0046872">
    <property type="term" value="F:metal ion binding"/>
    <property type="evidence" value="ECO:0007669"/>
    <property type="project" value="UniProtKB-KW"/>
</dbReference>
<dbReference type="GO" id="GO:0000166">
    <property type="term" value="F:nucleotide binding"/>
    <property type="evidence" value="ECO:0007669"/>
    <property type="project" value="UniProtKB-KW"/>
</dbReference>
<dbReference type="GO" id="GO:0017111">
    <property type="term" value="F:ribonucleoside triphosphate phosphatase activity"/>
    <property type="evidence" value="ECO:0000250"/>
    <property type="project" value="UniProtKB"/>
</dbReference>
<dbReference type="GO" id="GO:0009117">
    <property type="term" value="P:nucleotide metabolic process"/>
    <property type="evidence" value="ECO:0007669"/>
    <property type="project" value="UniProtKB-KW"/>
</dbReference>
<dbReference type="GO" id="GO:0006772">
    <property type="term" value="P:thiamine metabolic process"/>
    <property type="evidence" value="ECO:0007669"/>
    <property type="project" value="TreeGrafter"/>
</dbReference>
<dbReference type="FunFam" id="3.90.950.10:FF:000002">
    <property type="entry name" value="Inosine/xanthosine triphosphatase"/>
    <property type="match status" value="1"/>
</dbReference>
<dbReference type="Gene3D" id="3.90.950.10">
    <property type="match status" value="1"/>
</dbReference>
<dbReference type="HAMAP" id="MF_00648">
    <property type="entry name" value="Non_canon_purine_NTPase_YjjX"/>
    <property type="match status" value="1"/>
</dbReference>
<dbReference type="InterPro" id="IPR029001">
    <property type="entry name" value="ITPase-like_fam"/>
</dbReference>
<dbReference type="InterPro" id="IPR002786">
    <property type="entry name" value="Non_canon_purine_NTPase"/>
</dbReference>
<dbReference type="InterPro" id="IPR026533">
    <property type="entry name" value="NTPase/PRRC1"/>
</dbReference>
<dbReference type="InterPro" id="IPR050299">
    <property type="entry name" value="YjjX_NTPase"/>
</dbReference>
<dbReference type="NCBIfam" id="TIGR00258">
    <property type="entry name" value="inosine/xanthosine triphosphatase"/>
    <property type="match status" value="1"/>
</dbReference>
<dbReference type="NCBIfam" id="NF003459">
    <property type="entry name" value="PRK05074.1"/>
    <property type="match status" value="1"/>
</dbReference>
<dbReference type="PANTHER" id="PTHR34699">
    <property type="match status" value="1"/>
</dbReference>
<dbReference type="PANTHER" id="PTHR34699:SF2">
    <property type="entry name" value="NON-CANONICAL PURINE NTP PHOSPHATASE_PRRC1 DOMAIN-CONTAINING PROTEIN"/>
    <property type="match status" value="1"/>
</dbReference>
<dbReference type="Pfam" id="PF01931">
    <property type="entry name" value="NTPase_I-T"/>
    <property type="match status" value="1"/>
</dbReference>
<dbReference type="SUPFAM" id="SSF52972">
    <property type="entry name" value="ITPase-like"/>
    <property type="match status" value="1"/>
</dbReference>
<accession>B2VH10</accession>
<organism>
    <name type="scientific">Erwinia tasmaniensis (strain DSM 17950 / CFBP 7177 / CIP 109463 / NCPPB 4357 / Et1/99)</name>
    <dbReference type="NCBI Taxonomy" id="465817"/>
    <lineage>
        <taxon>Bacteria</taxon>
        <taxon>Pseudomonadati</taxon>
        <taxon>Pseudomonadota</taxon>
        <taxon>Gammaproteobacteria</taxon>
        <taxon>Enterobacterales</taxon>
        <taxon>Erwiniaceae</taxon>
        <taxon>Erwinia</taxon>
    </lineage>
</organism>